<protein>
    <recommendedName>
        <fullName>Zinc metalloproteinase nas-2</fullName>
        <ecNumber evidence="1">3.4.24.-</ecNumber>
    </recommendedName>
    <alternativeName>
        <fullName>Nematode astacin 2</fullName>
    </alternativeName>
</protein>
<proteinExistence type="inferred from homology"/>
<name>NAS2_CAEEL</name>
<dbReference type="EC" id="3.4.24.-" evidence="1"/>
<dbReference type="EMBL" id="FO080246">
    <property type="protein sequence ID" value="CCD62311.1"/>
    <property type="molecule type" value="Genomic_DNA"/>
</dbReference>
<dbReference type="RefSeq" id="NP_503678.3">
    <property type="nucleotide sequence ID" value="NM_071277.3"/>
</dbReference>
<dbReference type="SMR" id="Q9N5R0"/>
<dbReference type="FunCoup" id="Q9N5R0">
    <property type="interactions" value="1"/>
</dbReference>
<dbReference type="STRING" id="6239.F56A4.1.1"/>
<dbReference type="MEROPS" id="M12.A15"/>
<dbReference type="GlyCosmos" id="Q9N5R0">
    <property type="glycosylation" value="2 sites, No reported glycans"/>
</dbReference>
<dbReference type="PaxDb" id="6239-F56A4.1"/>
<dbReference type="EnsemblMetazoa" id="F56A4.1.1">
    <property type="protein sequence ID" value="F56A4.1.1"/>
    <property type="gene ID" value="WBGene00003521"/>
</dbReference>
<dbReference type="GeneID" id="186345"/>
<dbReference type="KEGG" id="cel:CELE_F56A4.1"/>
<dbReference type="KEGG" id="cel:CELE_Y19D10A.6"/>
<dbReference type="UCSC" id="F56A4.1">
    <property type="organism name" value="c. elegans"/>
</dbReference>
<dbReference type="AGR" id="WB:WBGene00003521"/>
<dbReference type="CTD" id="186345"/>
<dbReference type="CTD" id="189484"/>
<dbReference type="WormBase" id="F56A4.1">
    <property type="protein sequence ID" value="CE51070"/>
    <property type="gene ID" value="WBGene00003521"/>
    <property type="gene designation" value="nas-2"/>
</dbReference>
<dbReference type="eggNOG" id="KOG3714">
    <property type="taxonomic scope" value="Eukaryota"/>
</dbReference>
<dbReference type="GeneTree" id="ENSGT00940000154856"/>
<dbReference type="HOGENOM" id="CLU_998309_0_0_1"/>
<dbReference type="InParanoid" id="Q9N5R0"/>
<dbReference type="OMA" id="ITQHELM"/>
<dbReference type="OrthoDB" id="291007at2759"/>
<dbReference type="PhylomeDB" id="Q9N5R0"/>
<dbReference type="PRO" id="PR:Q9N5R0"/>
<dbReference type="Proteomes" id="UP000001940">
    <property type="component" value="Chromosome V"/>
</dbReference>
<dbReference type="GO" id="GO:0005576">
    <property type="term" value="C:extracellular region"/>
    <property type="evidence" value="ECO:0007669"/>
    <property type="project" value="UniProtKB-SubCell"/>
</dbReference>
<dbReference type="GO" id="GO:0004222">
    <property type="term" value="F:metalloendopeptidase activity"/>
    <property type="evidence" value="ECO:0000318"/>
    <property type="project" value="GO_Central"/>
</dbReference>
<dbReference type="GO" id="GO:0008270">
    <property type="term" value="F:zinc ion binding"/>
    <property type="evidence" value="ECO:0007669"/>
    <property type="project" value="InterPro"/>
</dbReference>
<dbReference type="GO" id="GO:0006508">
    <property type="term" value="P:proteolysis"/>
    <property type="evidence" value="ECO:0007669"/>
    <property type="project" value="UniProtKB-KW"/>
</dbReference>
<dbReference type="FunFam" id="3.40.390.10:FF:000078">
    <property type="entry name" value="Metalloendopeptidase"/>
    <property type="match status" value="1"/>
</dbReference>
<dbReference type="Gene3D" id="3.40.390.10">
    <property type="entry name" value="Collagenase (Catalytic Domain)"/>
    <property type="match status" value="1"/>
</dbReference>
<dbReference type="InterPro" id="IPR024079">
    <property type="entry name" value="MetalloPept_cat_dom_sf"/>
</dbReference>
<dbReference type="InterPro" id="IPR001506">
    <property type="entry name" value="Peptidase_M12A"/>
</dbReference>
<dbReference type="InterPro" id="IPR006026">
    <property type="entry name" value="Peptidase_Metallo"/>
</dbReference>
<dbReference type="PANTHER" id="PTHR10127">
    <property type="entry name" value="DISCOIDIN, CUB, EGF, LAMININ , AND ZINC METALLOPROTEASE DOMAIN CONTAINING"/>
    <property type="match status" value="1"/>
</dbReference>
<dbReference type="PANTHER" id="PTHR10127:SF795">
    <property type="entry name" value="METALLOENDOPEPTIDASE-RELATED"/>
    <property type="match status" value="1"/>
</dbReference>
<dbReference type="Pfam" id="PF01400">
    <property type="entry name" value="Astacin"/>
    <property type="match status" value="1"/>
</dbReference>
<dbReference type="PRINTS" id="PR00480">
    <property type="entry name" value="ASTACIN"/>
</dbReference>
<dbReference type="SMART" id="SM00235">
    <property type="entry name" value="ZnMc"/>
    <property type="match status" value="1"/>
</dbReference>
<dbReference type="SUPFAM" id="SSF55486">
    <property type="entry name" value="Metalloproteases ('zincins'), catalytic domain"/>
    <property type="match status" value="1"/>
</dbReference>
<dbReference type="PROSITE" id="PS51864">
    <property type="entry name" value="ASTACIN"/>
    <property type="match status" value="1"/>
</dbReference>
<dbReference type="PROSITE" id="PS00142">
    <property type="entry name" value="ZINC_PROTEASE"/>
    <property type="match status" value="1"/>
</dbReference>
<reference key="1">
    <citation type="journal article" date="1998" name="Science">
        <title>Genome sequence of the nematode C. elegans: a platform for investigating biology.</title>
        <authorList>
            <consortium name="The C. elegans sequencing consortium"/>
        </authorList>
    </citation>
    <scope>NUCLEOTIDE SEQUENCE [LARGE SCALE GENOMIC DNA]</scope>
    <source>
        <strain>Bristol N2</strain>
    </source>
</reference>
<reference key="2">
    <citation type="journal article" date="2003" name="Eur. J. Biochem.">
        <title>The astacin protein family in Caenorhabditis elegans.</title>
        <authorList>
            <person name="Moehrlen F."/>
            <person name="Hutter H."/>
            <person name="Zwilling R."/>
        </authorList>
    </citation>
    <scope>IDENTIFICATION</scope>
    <scope>NOMENCLATURE</scope>
</reference>
<accession>Q9N5R0</accession>
<gene>
    <name type="primary">nas-2</name>
    <name type="ORF">F56A4.1</name>
</gene>
<feature type="signal peptide" evidence="3">
    <location>
        <begin position="1"/>
        <end position="17"/>
    </location>
</feature>
<feature type="propeptide" id="PRO_0000442650" evidence="2">
    <location>
        <begin position="18"/>
        <end position="67"/>
    </location>
</feature>
<feature type="chain" id="PRO_0000028907" description="Zinc metalloproteinase nas-2">
    <location>
        <begin position="68"/>
        <end position="293"/>
    </location>
</feature>
<feature type="domain" description="Peptidase M12A" evidence="4">
    <location>
        <begin position="67"/>
        <end position="260"/>
    </location>
</feature>
<feature type="active site" evidence="4">
    <location>
        <position position="181"/>
    </location>
</feature>
<feature type="binding site" evidence="4">
    <location>
        <position position="180"/>
    </location>
    <ligand>
        <name>Zn(2+)</name>
        <dbReference type="ChEBI" id="CHEBI:29105"/>
        <note>catalytic</note>
    </ligand>
</feature>
<feature type="binding site" evidence="4">
    <location>
        <position position="184"/>
    </location>
    <ligand>
        <name>Zn(2+)</name>
        <dbReference type="ChEBI" id="CHEBI:29105"/>
        <note>catalytic</note>
    </ligand>
</feature>
<feature type="binding site" evidence="4">
    <location>
        <position position="190"/>
    </location>
    <ligand>
        <name>Zn(2+)</name>
        <dbReference type="ChEBI" id="CHEBI:29105"/>
        <note>catalytic</note>
    </ligand>
</feature>
<feature type="glycosylation site" description="N-linked (GlcNAc...) asparagine" evidence="3">
    <location>
        <position position="111"/>
    </location>
</feature>
<feature type="glycosylation site" description="N-linked (GlcNAc...) asparagine" evidence="3">
    <location>
        <position position="287"/>
    </location>
</feature>
<feature type="disulfide bond" evidence="4">
    <location>
        <begin position="114"/>
        <end position="259"/>
    </location>
</feature>
<feature type="disulfide bond" evidence="4">
    <location>
        <begin position="139"/>
        <end position="169"/>
    </location>
</feature>
<evidence type="ECO:0000250" key="1">
    <source>
        <dbReference type="UniProtKB" id="A8Q2D1"/>
    </source>
</evidence>
<evidence type="ECO:0000250" key="2">
    <source>
        <dbReference type="UniProtKB" id="P13497"/>
    </source>
</evidence>
<evidence type="ECO:0000255" key="3"/>
<evidence type="ECO:0000255" key="4">
    <source>
        <dbReference type="PROSITE-ProRule" id="PRU01211"/>
    </source>
</evidence>
<evidence type="ECO:0000305" key="5"/>
<keyword id="KW-0165">Cleavage on pair of basic residues</keyword>
<keyword id="KW-1015">Disulfide bond</keyword>
<keyword id="KW-0325">Glycoprotein</keyword>
<keyword id="KW-0378">Hydrolase</keyword>
<keyword id="KW-0479">Metal-binding</keyword>
<keyword id="KW-0482">Metalloprotease</keyword>
<keyword id="KW-0645">Protease</keyword>
<keyword id="KW-1185">Reference proteome</keyword>
<keyword id="KW-0964">Secreted</keyword>
<keyword id="KW-0732">Signal</keyword>
<keyword id="KW-0862">Zinc</keyword>
<keyword id="KW-0865">Zymogen</keyword>
<comment type="function">
    <text evidence="1">Metalloprotease.</text>
</comment>
<comment type="cofactor">
    <cofactor evidence="4">
        <name>Zn(2+)</name>
        <dbReference type="ChEBI" id="CHEBI:29105"/>
    </cofactor>
    <text evidence="4">Binds 1 zinc ion per subunit.</text>
</comment>
<comment type="subcellular location">
    <subcellularLocation>
        <location evidence="5">Secreted</location>
    </subcellularLocation>
</comment>
<organism>
    <name type="scientific">Caenorhabditis elegans</name>
    <dbReference type="NCBI Taxonomy" id="6239"/>
    <lineage>
        <taxon>Eukaryota</taxon>
        <taxon>Metazoa</taxon>
        <taxon>Ecdysozoa</taxon>
        <taxon>Nematoda</taxon>
        <taxon>Chromadorea</taxon>
        <taxon>Rhabditida</taxon>
        <taxon>Rhabditina</taxon>
        <taxon>Rhabditomorpha</taxon>
        <taxon>Rhabditoidea</taxon>
        <taxon>Rhabditidae</taxon>
        <taxon>Peloderinae</taxon>
        <taxon>Caenorhabditis</taxon>
    </lineage>
</organism>
<sequence>MIFPLLLTLILPNFVAPKVLEPEKDDEIAVSTQREKTFFDMKLILTKLPTFEPSKYGHINIPLRKKRGIALHPLQWASYLWPNAEVPYDIATHYTSTEKSIILSAMEAFKNVTCVRFRPRAATDKHYLQINKYFNVERCFSYIGRQSSRTLFGTPEGNVETRMRLDPACLRGNGRGIVMHELMHILGFYHEHQRDDRDRRIVGSAVHYNFKIYRRAKTLYMGAYDANSIMHYNFQNLPWQRRDHFSTSDIININTFYKCKNLLSSKLAPKVPISPTSTSTTAITTTNTTTTKL</sequence>